<accession>Q7TNV9</accession>
<accession>Q14BD1</accession>
<reference key="1">
    <citation type="submission" date="2003-07" db="EMBL/GenBank/DDBJ databases">
        <title>Amino acid residues subject to positive selection in murine b-defensin antimicrobial peptides.</title>
        <authorList>
            <person name="Maxwell A."/>
            <person name="Dorin J.R."/>
        </authorList>
    </citation>
    <scope>NUCLEOTIDE SEQUENCE [MRNA]</scope>
    <source>
        <strain>C57BL/6J</strain>
    </source>
</reference>
<reference key="2">
    <citation type="journal article" date="2004" name="Genome Res.">
        <title>The status, quality, and expansion of the NIH full-length cDNA project: the Mammalian Gene Collection (MGC).</title>
        <authorList>
            <consortium name="The MGC Project Team"/>
        </authorList>
    </citation>
    <scope>NUCLEOTIDE SEQUENCE [LARGE SCALE MRNA]</scope>
</reference>
<proteinExistence type="inferred from homology"/>
<protein>
    <recommendedName>
        <fullName>Beta-defensin 14</fullName>
        <shortName>BD-14</shortName>
        <shortName>mBD-14</shortName>
    </recommendedName>
    <alternativeName>
        <fullName>Defensin, beta 14</fullName>
    </alternativeName>
</protein>
<organism>
    <name type="scientific">Mus musculus</name>
    <name type="common">Mouse</name>
    <dbReference type="NCBI Taxonomy" id="10090"/>
    <lineage>
        <taxon>Eukaryota</taxon>
        <taxon>Metazoa</taxon>
        <taxon>Chordata</taxon>
        <taxon>Craniata</taxon>
        <taxon>Vertebrata</taxon>
        <taxon>Euteleostomi</taxon>
        <taxon>Mammalia</taxon>
        <taxon>Eutheria</taxon>
        <taxon>Euarchontoglires</taxon>
        <taxon>Glires</taxon>
        <taxon>Rodentia</taxon>
        <taxon>Myomorpha</taxon>
        <taxon>Muroidea</taxon>
        <taxon>Muridae</taxon>
        <taxon>Murinae</taxon>
        <taxon>Mus</taxon>
        <taxon>Mus</taxon>
    </lineage>
</organism>
<sequence>MRLHYLLFVFLILFLVPAPGDAFLPKTLRKFFCRIRGGRCAVLNCLGKEEQIGRCSNSGRKCCRKKK</sequence>
<dbReference type="EMBL" id="AJ578468">
    <property type="protein sequence ID" value="CAE17665.2"/>
    <property type="molecule type" value="mRNA"/>
</dbReference>
<dbReference type="EMBL" id="BC116199">
    <property type="protein sequence ID" value="AAI16200.1"/>
    <property type="molecule type" value="mRNA"/>
</dbReference>
<dbReference type="CCDS" id="CCDS40253.1"/>
<dbReference type="RefSeq" id="NP_898847.1">
    <property type="nucleotide sequence ID" value="NM_183026.3"/>
</dbReference>
<dbReference type="RefSeq" id="XP_006508855.1">
    <property type="nucleotide sequence ID" value="XM_006508792.4"/>
</dbReference>
<dbReference type="RefSeq" id="XP_006508857.1">
    <property type="nucleotide sequence ID" value="XM_006508794.4"/>
</dbReference>
<dbReference type="RefSeq" id="XP_006508858.1">
    <property type="nucleotide sequence ID" value="XM_006508795.4"/>
</dbReference>
<dbReference type="RefSeq" id="XP_006508860.1">
    <property type="nucleotide sequence ID" value="XM_006508797.4"/>
</dbReference>
<dbReference type="SMR" id="Q7TNV9"/>
<dbReference type="FunCoup" id="Q7TNV9">
    <property type="interactions" value="366"/>
</dbReference>
<dbReference type="STRING" id="10090.ENSMUSP00000062781"/>
<dbReference type="TCDB" id="1.C.85.1.4">
    <property type="family name" value="the pore-forming Beta-defensin (Beta-defensin) family"/>
</dbReference>
<dbReference type="PaxDb" id="10090-ENSMUSP00000062781"/>
<dbReference type="ProteomicsDB" id="279347"/>
<dbReference type="Ensembl" id="ENSMUST00000052601.4">
    <property type="protein sequence ID" value="ENSMUSP00000062781.4"/>
    <property type="gene ID" value="ENSMUSG00000046354.4"/>
</dbReference>
<dbReference type="GeneID" id="244332"/>
<dbReference type="KEGG" id="mmu:244332"/>
<dbReference type="UCSC" id="uc009lai.2">
    <property type="organism name" value="mouse"/>
</dbReference>
<dbReference type="AGR" id="MGI:2675345"/>
<dbReference type="CTD" id="244332"/>
<dbReference type="MGI" id="MGI:2675345">
    <property type="gene designation" value="Defb14"/>
</dbReference>
<dbReference type="VEuPathDB" id="HostDB:ENSMUSG00000046354"/>
<dbReference type="eggNOG" id="ENOG502TF5P">
    <property type="taxonomic scope" value="Eukaryota"/>
</dbReference>
<dbReference type="GeneTree" id="ENSGT00530000064280"/>
<dbReference type="HOGENOM" id="CLU_189296_2_0_1"/>
<dbReference type="InParanoid" id="Q7TNV9"/>
<dbReference type="OMA" id="RETQIGH"/>
<dbReference type="OrthoDB" id="9449637at2759"/>
<dbReference type="PhylomeDB" id="Q7TNV9"/>
<dbReference type="Reactome" id="R-MMU-1461957">
    <property type="pathway name" value="Beta defensins"/>
</dbReference>
<dbReference type="Reactome" id="R-MMU-1461973">
    <property type="pathway name" value="Defensins"/>
</dbReference>
<dbReference type="BioGRID-ORCS" id="244332">
    <property type="hits" value="2 hits in 77 CRISPR screens"/>
</dbReference>
<dbReference type="ChiTaRS" id="Defb14">
    <property type="organism name" value="mouse"/>
</dbReference>
<dbReference type="PRO" id="PR:Q7TNV9"/>
<dbReference type="Proteomes" id="UP000000589">
    <property type="component" value="Chromosome 8"/>
</dbReference>
<dbReference type="RNAct" id="Q7TNV9">
    <property type="molecule type" value="protein"/>
</dbReference>
<dbReference type="Bgee" id="ENSMUSG00000046354">
    <property type="expression patterns" value="Expressed in esophagus and 19 other cell types or tissues"/>
</dbReference>
<dbReference type="GO" id="GO:0005615">
    <property type="term" value="C:extracellular space"/>
    <property type="evidence" value="ECO:0000266"/>
    <property type="project" value="MGI"/>
</dbReference>
<dbReference type="GO" id="GO:0042056">
    <property type="term" value="F:chemoattractant activity"/>
    <property type="evidence" value="ECO:0000314"/>
    <property type="project" value="MGI"/>
</dbReference>
<dbReference type="GO" id="GO:0060326">
    <property type="term" value="P:cell chemotaxis"/>
    <property type="evidence" value="ECO:0000314"/>
    <property type="project" value="MGI"/>
</dbReference>
<dbReference type="GO" id="GO:0042742">
    <property type="term" value="P:defense response to bacterium"/>
    <property type="evidence" value="ECO:0000314"/>
    <property type="project" value="MGI"/>
</dbReference>
<dbReference type="FunFam" id="3.10.360.10:FF:000001">
    <property type="entry name" value="Beta-defensin 1"/>
    <property type="match status" value="1"/>
</dbReference>
<dbReference type="Gene3D" id="3.10.360.10">
    <property type="entry name" value="Antimicrobial Peptide, Beta-defensin 2, Chain A"/>
    <property type="match status" value="1"/>
</dbReference>
<dbReference type="InterPro" id="IPR001855">
    <property type="entry name" value="Defensin_beta-like"/>
</dbReference>
<dbReference type="PANTHER" id="PTHR20515">
    <property type="entry name" value="BETA-DEFENSIN"/>
    <property type="match status" value="1"/>
</dbReference>
<dbReference type="PANTHER" id="PTHR20515:SF0">
    <property type="entry name" value="BETA-DEFENSIN 103"/>
    <property type="match status" value="1"/>
</dbReference>
<dbReference type="Pfam" id="PF00711">
    <property type="entry name" value="Defensin_beta"/>
    <property type="match status" value="1"/>
</dbReference>
<dbReference type="SUPFAM" id="SSF57392">
    <property type="entry name" value="Defensin-like"/>
    <property type="match status" value="1"/>
</dbReference>
<comment type="function">
    <text evidence="1">Has antibacterial activity.</text>
</comment>
<comment type="subcellular location">
    <subcellularLocation>
        <location evidence="1">Secreted</location>
    </subcellularLocation>
</comment>
<comment type="similarity">
    <text evidence="3">Belongs to the beta-defensin family.</text>
</comment>
<name>DFB14_MOUSE</name>
<gene>
    <name type="primary">Defb14</name>
</gene>
<keyword id="KW-0044">Antibiotic</keyword>
<keyword id="KW-0929">Antimicrobial</keyword>
<keyword id="KW-0211">Defensin</keyword>
<keyword id="KW-1015">Disulfide bond</keyword>
<keyword id="KW-1185">Reference proteome</keyword>
<keyword id="KW-0964">Secreted</keyword>
<keyword id="KW-0732">Signal</keyword>
<feature type="signal peptide" evidence="2">
    <location>
        <begin position="1"/>
        <end position="22"/>
    </location>
</feature>
<feature type="chain" id="PRO_0000006942" description="Beta-defensin 14">
    <location>
        <begin position="23"/>
        <end position="67"/>
    </location>
</feature>
<feature type="disulfide bond" evidence="1">
    <location>
        <begin position="33"/>
        <end position="62"/>
    </location>
</feature>
<feature type="disulfide bond" evidence="1">
    <location>
        <begin position="40"/>
        <end position="55"/>
    </location>
</feature>
<feature type="disulfide bond" evidence="1">
    <location>
        <begin position="45"/>
        <end position="63"/>
    </location>
</feature>
<evidence type="ECO:0000250" key="1"/>
<evidence type="ECO:0000255" key="2"/>
<evidence type="ECO:0000305" key="3"/>